<feature type="chain" id="PRO_0000154954" description="ATP-sensitive inward rectifier potassium channel 10">
    <location>
        <begin position="1"/>
        <end position="379"/>
    </location>
</feature>
<feature type="topological domain" description="Cytoplasmic" evidence="9">
    <location>
        <begin position="1"/>
        <end position="61"/>
    </location>
</feature>
<feature type="transmembrane region" description="Helical; Name=M1" evidence="2">
    <location>
        <begin position="62"/>
        <end position="88"/>
    </location>
</feature>
<feature type="topological domain" description="Extracellular" evidence="9">
    <location>
        <begin position="89"/>
        <end position="114"/>
    </location>
</feature>
<feature type="intramembrane region" description="Discontinuously helical; Pore-forming" evidence="2">
    <location>
        <begin position="115"/>
        <end position="131"/>
    </location>
</feature>
<feature type="topological domain" description="Extracellular" evidence="9">
    <location>
        <begin position="132"/>
        <end position="140"/>
    </location>
</feature>
<feature type="transmembrane region" description="Helical; Name=M2" evidence="2">
    <location>
        <begin position="141"/>
        <end position="166"/>
    </location>
</feature>
<feature type="topological domain" description="Cytoplasmic" evidence="9">
    <location>
        <begin position="167"/>
        <end position="379"/>
    </location>
</feature>
<feature type="short sequence motif" description="Selectivity filter" evidence="1">
    <location>
        <begin position="128"/>
        <end position="133"/>
    </location>
</feature>
<feature type="binding site" evidence="2">
    <location>
        <position position="36"/>
    </location>
    <ligand>
        <name>1,2-dioctanoyl-sn-glycero-3-phospho-(1D-myo-inositol-4,5-bisphosphate)</name>
        <dbReference type="ChEBI" id="CHEBI:83419"/>
    </ligand>
</feature>
<feature type="binding site" evidence="2">
    <location>
        <position position="168"/>
    </location>
    <ligand>
        <name>1,2-dioctanoyl-sn-glycero-3-phospho-(1D-myo-inositol-4,5-bisphosphate)</name>
        <dbReference type="ChEBI" id="CHEBI:83419"/>
    </ligand>
</feature>
<feature type="binding site" evidence="2">
    <location>
        <position position="171"/>
    </location>
    <ligand>
        <name>1,2-dioctanoyl-sn-glycero-3-phospho-(1D-myo-inositol-4,5-bisphosphate)</name>
        <dbReference type="ChEBI" id="CHEBI:83419"/>
    </ligand>
</feature>
<feature type="binding site" evidence="2">
    <location>
        <position position="173"/>
    </location>
    <ligand>
        <name>1,2-dioctanoyl-sn-glycero-3-phospho-(1D-myo-inositol-4,5-bisphosphate)</name>
        <dbReference type="ChEBI" id="CHEBI:83419"/>
    </ligand>
</feature>
<feature type="binding site" evidence="4">
    <location>
        <begin position="210"/>
        <end position="217"/>
    </location>
    <ligand>
        <name>ATP</name>
        <dbReference type="ChEBI" id="CHEBI:30616"/>
    </ligand>
</feature>
<feature type="site" description="Role in the control of polyamine-mediated channel gating and in the blocking by intracellular magnesium" evidence="1">
    <location>
        <position position="158"/>
    </location>
</feature>
<feature type="disulfide bond" evidence="2">
    <location>
        <begin position="108"/>
        <end position="140"/>
    </location>
</feature>
<evidence type="ECO:0000250" key="1"/>
<evidence type="ECO:0000250" key="2">
    <source>
        <dbReference type="UniProtKB" id="P49655"/>
    </source>
</evidence>
<evidence type="ECO:0000250" key="3">
    <source>
        <dbReference type="UniProtKB" id="P78508"/>
    </source>
</evidence>
<evidence type="ECO:0000255" key="4"/>
<evidence type="ECO:0000269" key="5">
    <source>
    </source>
</evidence>
<evidence type="ECO:0000269" key="6">
    <source>
    </source>
</evidence>
<evidence type="ECO:0000269" key="7">
    <source>
    </source>
</evidence>
<evidence type="ECO:0000269" key="8">
    <source>
    </source>
</evidence>
<evidence type="ECO:0000305" key="9"/>
<evidence type="ECO:0000312" key="10">
    <source>
        <dbReference type="MGI" id="MGI:1194504"/>
    </source>
</evidence>
<dbReference type="EMBL" id="AB039879">
    <property type="protein sequence ID" value="BAA92432.1"/>
    <property type="molecule type" value="mRNA"/>
</dbReference>
<dbReference type="EMBL" id="AF322631">
    <property type="protein sequence ID" value="AAG42845.1"/>
    <property type="molecule type" value="mRNA"/>
</dbReference>
<dbReference type="CCDS" id="CCDS15512.1"/>
<dbReference type="RefSeq" id="NP_001034573.1">
    <property type="nucleotide sequence ID" value="NM_001039484.1"/>
</dbReference>
<dbReference type="RefSeq" id="XP_006496740.2">
    <property type="nucleotide sequence ID" value="XM_006496677.3"/>
</dbReference>
<dbReference type="SMR" id="Q9JM63"/>
<dbReference type="BioGRID" id="200895">
    <property type="interactions" value="11"/>
</dbReference>
<dbReference type="CORUM" id="Q9JM63"/>
<dbReference type="FunCoup" id="Q9JM63">
    <property type="interactions" value="216"/>
</dbReference>
<dbReference type="IntAct" id="Q9JM63">
    <property type="interactions" value="6"/>
</dbReference>
<dbReference type="MINT" id="Q9JM63"/>
<dbReference type="STRING" id="10090.ENSMUSP00000054356"/>
<dbReference type="GlyGen" id="Q9JM63">
    <property type="glycosylation" value="2 sites"/>
</dbReference>
<dbReference type="iPTMnet" id="Q9JM63"/>
<dbReference type="PhosphoSitePlus" id="Q9JM63"/>
<dbReference type="SwissPalm" id="Q9JM63"/>
<dbReference type="PaxDb" id="10090-ENSMUSP00000054356"/>
<dbReference type="ProteomicsDB" id="301767"/>
<dbReference type="Antibodypedia" id="1679">
    <property type="antibodies" value="284 antibodies from 28 providers"/>
</dbReference>
<dbReference type="DNASU" id="16513"/>
<dbReference type="Ensembl" id="ENSMUST00000056136.4">
    <property type="protein sequence ID" value="ENSMUSP00000054356.4"/>
    <property type="gene ID" value="ENSMUSG00000044708.6"/>
</dbReference>
<dbReference type="GeneID" id="16513"/>
<dbReference type="KEGG" id="mmu:16513"/>
<dbReference type="UCSC" id="uc007dqj.1">
    <property type="organism name" value="mouse"/>
</dbReference>
<dbReference type="AGR" id="MGI:1194504"/>
<dbReference type="CTD" id="3766"/>
<dbReference type="MGI" id="MGI:1194504">
    <property type="gene designation" value="Kcnj10"/>
</dbReference>
<dbReference type="VEuPathDB" id="HostDB:ENSMUSG00000044708"/>
<dbReference type="eggNOG" id="KOG3827">
    <property type="taxonomic scope" value="Eukaryota"/>
</dbReference>
<dbReference type="GeneTree" id="ENSGT00990000203615"/>
<dbReference type="HOGENOM" id="CLU_022738_3_3_1"/>
<dbReference type="InParanoid" id="Q9JM63"/>
<dbReference type="OMA" id="QVNVAFQ"/>
<dbReference type="OrthoDB" id="273257at2759"/>
<dbReference type="PhylomeDB" id="Q9JM63"/>
<dbReference type="TreeFam" id="TF313676"/>
<dbReference type="Reactome" id="R-MMU-1296041">
    <property type="pathway name" value="Activation of G protein gated Potassium channels"/>
</dbReference>
<dbReference type="Reactome" id="R-MMU-1296067">
    <property type="pathway name" value="Potassium transport channels"/>
</dbReference>
<dbReference type="Reactome" id="R-MMU-997272">
    <property type="pathway name" value="Inhibition of voltage gated Ca2+ channels via Gbeta/gamma subunits"/>
</dbReference>
<dbReference type="BioGRID-ORCS" id="16513">
    <property type="hits" value="3 hits in 78 CRISPR screens"/>
</dbReference>
<dbReference type="ChiTaRS" id="Kcnj10">
    <property type="organism name" value="mouse"/>
</dbReference>
<dbReference type="PRO" id="PR:Q9JM63"/>
<dbReference type="Proteomes" id="UP000000589">
    <property type="component" value="Chromosome 1"/>
</dbReference>
<dbReference type="RNAct" id="Q9JM63">
    <property type="molecule type" value="protein"/>
</dbReference>
<dbReference type="Bgee" id="ENSMUSG00000044708">
    <property type="expression patterns" value="Expressed in cerebellar nuclear complex and 108 other cell types or tissues"/>
</dbReference>
<dbReference type="ExpressionAtlas" id="Q9JM63">
    <property type="expression patterns" value="baseline and differential"/>
</dbReference>
<dbReference type="GO" id="GO:0097449">
    <property type="term" value="C:astrocyte projection"/>
    <property type="evidence" value="ECO:0000314"/>
    <property type="project" value="ARUK-UCL"/>
</dbReference>
<dbReference type="GO" id="GO:0016323">
    <property type="term" value="C:basolateral plasma membrane"/>
    <property type="evidence" value="ECO:0000314"/>
    <property type="project" value="MGI"/>
</dbReference>
<dbReference type="GO" id="GO:0044297">
    <property type="term" value="C:cell body"/>
    <property type="evidence" value="ECO:0000314"/>
    <property type="project" value="ARUK-UCL"/>
</dbReference>
<dbReference type="GO" id="GO:0097546">
    <property type="term" value="C:ciliary base"/>
    <property type="evidence" value="ECO:0000314"/>
    <property type="project" value="MGI"/>
</dbReference>
<dbReference type="GO" id="GO:0034702">
    <property type="term" value="C:monoatomic ion channel complex"/>
    <property type="evidence" value="ECO:0007669"/>
    <property type="project" value="UniProtKB-KW"/>
</dbReference>
<dbReference type="GO" id="GO:0005886">
    <property type="term" value="C:plasma membrane"/>
    <property type="evidence" value="ECO:0000314"/>
    <property type="project" value="MGI"/>
</dbReference>
<dbReference type="GO" id="GO:0098793">
    <property type="term" value="C:presynapse"/>
    <property type="evidence" value="ECO:0007669"/>
    <property type="project" value="GOC"/>
</dbReference>
<dbReference type="GO" id="GO:0005524">
    <property type="term" value="F:ATP binding"/>
    <property type="evidence" value="ECO:0007669"/>
    <property type="project" value="UniProtKB-KW"/>
</dbReference>
<dbReference type="GO" id="GO:0005242">
    <property type="term" value="F:inward rectifier potassium channel activity"/>
    <property type="evidence" value="ECO:0000315"/>
    <property type="project" value="MGI"/>
</dbReference>
<dbReference type="GO" id="GO:0005267">
    <property type="term" value="F:potassium channel activity"/>
    <property type="evidence" value="ECO:0000314"/>
    <property type="project" value="MGI"/>
</dbReference>
<dbReference type="GO" id="GO:0007628">
    <property type="term" value="P:adult walking behavior"/>
    <property type="evidence" value="ECO:0000315"/>
    <property type="project" value="MGI"/>
</dbReference>
<dbReference type="GO" id="GO:0035865">
    <property type="term" value="P:cellular response to potassium ion"/>
    <property type="evidence" value="ECO:0000315"/>
    <property type="project" value="MGI"/>
</dbReference>
<dbReference type="GO" id="GO:0022010">
    <property type="term" value="P:central nervous system myelination"/>
    <property type="evidence" value="ECO:0000315"/>
    <property type="project" value="MGI"/>
</dbReference>
<dbReference type="GO" id="GO:0051649">
    <property type="term" value="P:establishment of localization in cell"/>
    <property type="evidence" value="ECO:0000315"/>
    <property type="project" value="MGI"/>
</dbReference>
<dbReference type="GO" id="GO:0051935">
    <property type="term" value="P:glutamate reuptake"/>
    <property type="evidence" value="ECO:0000315"/>
    <property type="project" value="MGI"/>
</dbReference>
<dbReference type="GO" id="GO:1905515">
    <property type="term" value="P:non-motile cilium assembly"/>
    <property type="evidence" value="ECO:0000315"/>
    <property type="project" value="MGI"/>
</dbReference>
<dbReference type="GO" id="GO:0014003">
    <property type="term" value="P:oligodendrocyte development"/>
    <property type="evidence" value="ECO:0000315"/>
    <property type="project" value="MGI"/>
</dbReference>
<dbReference type="GO" id="GO:0055075">
    <property type="term" value="P:potassium ion homeostasis"/>
    <property type="evidence" value="ECO:0000315"/>
    <property type="project" value="MGI"/>
</dbReference>
<dbReference type="GO" id="GO:0071805">
    <property type="term" value="P:potassium ion transmembrane transport"/>
    <property type="evidence" value="ECO:0000315"/>
    <property type="project" value="MGI"/>
</dbReference>
<dbReference type="GO" id="GO:0006813">
    <property type="term" value="P:potassium ion transport"/>
    <property type="evidence" value="ECO:0000314"/>
    <property type="project" value="MGI"/>
</dbReference>
<dbReference type="GO" id="GO:0048169">
    <property type="term" value="P:regulation of long-term neuronal synaptic plasticity"/>
    <property type="evidence" value="ECO:0000315"/>
    <property type="project" value="MGI"/>
</dbReference>
<dbReference type="GO" id="GO:0042391">
    <property type="term" value="P:regulation of membrane potential"/>
    <property type="evidence" value="ECO:0000315"/>
    <property type="project" value="MGI"/>
</dbReference>
<dbReference type="GO" id="GO:0060075">
    <property type="term" value="P:regulation of resting membrane potential"/>
    <property type="evidence" value="ECO:0000315"/>
    <property type="project" value="MGI"/>
</dbReference>
<dbReference type="GO" id="GO:0007601">
    <property type="term" value="P:visual perception"/>
    <property type="evidence" value="ECO:0000315"/>
    <property type="project" value="MGI"/>
</dbReference>
<dbReference type="FunFam" id="1.10.287.70:FF:000036">
    <property type="entry name" value="ATP-sensitive inward rectifier potassium channel 1"/>
    <property type="match status" value="1"/>
</dbReference>
<dbReference type="FunFam" id="2.60.40.1400:FF:000002">
    <property type="entry name" value="ATP-sensitive inward rectifier potassium channel 1"/>
    <property type="match status" value="1"/>
</dbReference>
<dbReference type="Gene3D" id="1.10.287.70">
    <property type="match status" value="1"/>
</dbReference>
<dbReference type="Gene3D" id="2.60.40.1400">
    <property type="entry name" value="G protein-activated inward rectifier potassium channel 1"/>
    <property type="match status" value="1"/>
</dbReference>
<dbReference type="InterPro" id="IPR014756">
    <property type="entry name" value="Ig_E-set"/>
</dbReference>
<dbReference type="InterPro" id="IPR041647">
    <property type="entry name" value="IRK_C"/>
</dbReference>
<dbReference type="InterPro" id="IPR016449">
    <property type="entry name" value="K_chnl_inward-rec_Kir"/>
</dbReference>
<dbReference type="InterPro" id="IPR003269">
    <property type="entry name" value="K_chnl_inward-rec_Kir1.2"/>
</dbReference>
<dbReference type="InterPro" id="IPR013518">
    <property type="entry name" value="K_chnl_inward-rec_Kir_cyto"/>
</dbReference>
<dbReference type="InterPro" id="IPR040445">
    <property type="entry name" value="Kir_TM"/>
</dbReference>
<dbReference type="PANTHER" id="PTHR11767:SF21">
    <property type="entry name" value="ATP-SENSITIVE INWARD RECTIFIER POTASSIUM CHANNEL 10"/>
    <property type="match status" value="1"/>
</dbReference>
<dbReference type="PANTHER" id="PTHR11767">
    <property type="entry name" value="INWARD RECTIFIER POTASSIUM CHANNEL"/>
    <property type="match status" value="1"/>
</dbReference>
<dbReference type="Pfam" id="PF01007">
    <property type="entry name" value="IRK"/>
    <property type="match status" value="1"/>
</dbReference>
<dbReference type="Pfam" id="PF17655">
    <property type="entry name" value="IRK_C"/>
    <property type="match status" value="1"/>
</dbReference>
<dbReference type="PIRSF" id="PIRSF005465">
    <property type="entry name" value="GIRK_kir"/>
    <property type="match status" value="1"/>
</dbReference>
<dbReference type="PRINTS" id="PR01322">
    <property type="entry name" value="KIR12CHANNEL"/>
</dbReference>
<dbReference type="PRINTS" id="PR01320">
    <property type="entry name" value="KIRCHANNEL"/>
</dbReference>
<dbReference type="SUPFAM" id="SSF81296">
    <property type="entry name" value="E set domains"/>
    <property type="match status" value="1"/>
</dbReference>
<dbReference type="SUPFAM" id="SSF81324">
    <property type="entry name" value="Voltage-gated potassium channels"/>
    <property type="match status" value="1"/>
</dbReference>
<sequence length="379" mass="42432">MTSVAKVYYSQTTQTESRPLVAPGIRRRRVLTKDGRSNVRMEHIADKRFLYLKDLWTTFIDMQWRYKLLLFSATFAGTWFLFGVVWYLVAVAHGDLLELGPPANHTPCVVQVHTLTGAFLFSLESQTTIGYGFRYISEECPLAIVLLIAQLVLTTILEIFITGTFLAKIARPKKRAETIRFSQHAVVASHNGKPCLMIRVANMRKSLLIGCQVTGKLLQTHQTKEGENIRLNQVNVTFQVDTASDSPFLILPLTFYHVVDETSPLKDLPLRSGEGDFELVLILSGTVESTSATCQVRTSYLPEEILWGYEFTPAISLSASGKYIADFSLFDQVVKVASPSGLRDSTVRYGDPEKLKLEESLREQAEKEGSALSVRISNV</sequence>
<reference key="1">
    <citation type="submission" date="2000-03" db="EMBL/GenBank/DDBJ databases">
        <authorList>
            <person name="Inanobe A."/>
            <person name="Takahashi K."/>
            <person name="Tanemoto M."/>
            <person name="Fujita A."/>
            <person name="Kurachi Y."/>
        </authorList>
    </citation>
    <scope>NUCLEOTIDE SEQUENCE [MRNA]</scope>
</reference>
<reference key="2">
    <citation type="journal article" date="2001" name="Glia">
        <title>Identification of an inward rectifier potassium channel gene expressed in mouse cortical astrocytes.</title>
        <authorList>
            <person name="Li L."/>
            <person name="Head V."/>
            <person name="Timpe L.C."/>
        </authorList>
    </citation>
    <scope>NUCLEOTIDE SEQUENCE [MRNA]</scope>
    <scope>TISSUE SPECIFICITY</scope>
    <source>
        <strain>CD-1</strain>
        <strain>ICR</strain>
        <tissue>Brain</tissue>
    </source>
</reference>
<reference key="3">
    <citation type="journal article" date="1998" name="Mol. Cell. Neurosci.">
        <title>CIPP, a novel multivalent PDZ domain protein, selectively interacts with Kir4.0 family members, NMDA receptor subunits, neurexins, and neuroligins.</title>
        <authorList>
            <person name="Kurschner C."/>
            <person name="Mermelstein P.G."/>
            <person name="Holden W.T."/>
            <person name="Surmeier D.J."/>
        </authorList>
    </citation>
    <scope>INTERACTION WITH PATJ</scope>
</reference>
<reference key="4">
    <citation type="journal article" date="2009" name="N. Engl. J. Med.">
        <title>Epilepsy, ataxia, sensorineural deafness, tubulopathy, and KCNJ10 mutations.</title>
        <authorList>
            <person name="Bockenhauer D."/>
            <person name="Feather S."/>
            <person name="Stanescu H.C."/>
            <person name="Bandulik S."/>
            <person name="Zdebik A.A."/>
            <person name="Reichold M."/>
            <person name="Tobin J."/>
            <person name="Lieberer E."/>
            <person name="Sterner C."/>
            <person name="Landoure G."/>
            <person name="Arora R."/>
            <person name="Sirimanna T."/>
            <person name="Thompson D."/>
            <person name="Cross J.H."/>
            <person name="van't Hoff W."/>
            <person name="Al Masri O."/>
            <person name="Tullus K."/>
            <person name="Yeung S."/>
            <person name="Anikster Y."/>
            <person name="Klootwijk E."/>
            <person name="Hubank M."/>
            <person name="Dillon M.J."/>
            <person name="Heitzmann D."/>
            <person name="Arcos-Burgos M."/>
            <person name="Knepper M.A."/>
            <person name="Dobbie A."/>
            <person name="Gahl W.A."/>
            <person name="Warth R."/>
            <person name="Sheridan E."/>
            <person name="Kleta R."/>
        </authorList>
    </citation>
    <scope>TISSUE SPECIFICITY</scope>
    <scope>DISRUPTION PHENOTYPE</scope>
</reference>
<reference key="5">
    <citation type="journal article" date="2010" name="Cell">
        <title>A tissue-specific atlas of mouse protein phosphorylation and expression.</title>
        <authorList>
            <person name="Huttlin E.L."/>
            <person name="Jedrychowski M.P."/>
            <person name="Elias J.E."/>
            <person name="Goswami T."/>
            <person name="Rad R."/>
            <person name="Beausoleil S.A."/>
            <person name="Villen J."/>
            <person name="Haas W."/>
            <person name="Sowa M.E."/>
            <person name="Gygi S.P."/>
        </authorList>
    </citation>
    <scope>IDENTIFICATION BY MASS SPECTROMETRY [LARGE SCALE ANALYSIS]</scope>
    <source>
        <tissue>Brain</tissue>
        <tissue>Kidney</tissue>
    </source>
</reference>
<reference key="6">
    <citation type="journal article" date="2021" name="J. Am. Soc. Nephrol.">
        <title>Defects in KCNJ16 cause a novel tubulopathy with hypokalemia, salt wasting, disturbed acid-base homeostasis, and sensorineural deafness.</title>
        <authorList>
            <person name="Schlingmann K.P."/>
            <person name="Renigunta A."/>
            <person name="Hoorn E.J."/>
            <person name="Forst A.L."/>
            <person name="Renigunta V."/>
            <person name="Atanasov V."/>
            <person name="Mahendran S."/>
            <person name="Barakat T.S."/>
            <person name="Gillion V."/>
            <person name="Godefroid N."/>
            <person name="Brooks A.S."/>
            <person name="Lugtenberg D."/>
            <person name="Lake J."/>
            <person name="Debaix H."/>
            <person name="Rudin C."/>
            <person name="Knebelmann B."/>
            <person name="Tellier S."/>
            <person name="Rousset-Rouviere C."/>
            <person name="Viering D."/>
            <person name="de Baaij J.H.F."/>
            <person name="Weber S."/>
            <person name="Palygin O."/>
            <person name="Staruschenko A."/>
            <person name="Kleta R."/>
            <person name="Houillier P."/>
            <person name="Bockenhauer D."/>
            <person name="Devuyst O."/>
            <person name="Vargas-Poussou R."/>
            <person name="Warth R."/>
            <person name="Zdebik A.A."/>
            <person name="Konrad M."/>
        </authorList>
    </citation>
    <scope>TISSUE SPECIFICITY</scope>
    <scope>SUBCELLULAR LOCATION</scope>
</reference>
<accession>Q9JM63</accession>
<gene>
    <name evidence="10" type="primary">Kcnj10</name>
</gene>
<name>KCJ10_MOUSE</name>
<protein>
    <recommendedName>
        <fullName>ATP-sensitive inward rectifier potassium channel 10</fullName>
    </recommendedName>
    <alternativeName>
        <fullName>Inward rectifier K(+) channel Kir4.1</fullName>
    </alternativeName>
    <alternativeName>
        <fullName>Potassium channel, inwardly rectifying subfamily J member 10</fullName>
    </alternativeName>
</protein>
<keyword id="KW-0067">ATP-binding</keyword>
<keyword id="KW-1003">Cell membrane</keyword>
<keyword id="KW-1015">Disulfide bond</keyword>
<keyword id="KW-0407">Ion channel</keyword>
<keyword id="KW-0406">Ion transport</keyword>
<keyword id="KW-0472">Membrane</keyword>
<keyword id="KW-0547">Nucleotide-binding</keyword>
<keyword id="KW-0630">Potassium</keyword>
<keyword id="KW-0633">Potassium transport</keyword>
<keyword id="KW-1185">Reference proteome</keyword>
<keyword id="KW-0812">Transmembrane</keyword>
<keyword id="KW-1133">Transmembrane helix</keyword>
<keyword id="KW-0813">Transport</keyword>
<keyword id="KW-0851">Voltage-gated channel</keyword>
<comment type="function">
    <text evidence="1 2 3">May be responsible for potassium buffering action of glial cells in the brain (By similarity). Inward rectifier potassium channels are characterized by a greater tendency to allow potassium to flow into the cell rather than out of it. Their voltage dependence is regulated by the concentration of extracellular potassium; as external potassium is raised, the voltage range of the channel opening shifts to more positive voltages. The inward rectification is mainly due to the blockage of outward current by internal magnesium. Can be blocked by extracellular barium and cesium (By similarity). In the kidney, together with KCNJ16, mediates basolateral K(+) recycling in distal tubules; this process is critical for Na(+) reabsorption at the tubules (By similarity).</text>
</comment>
<comment type="catalytic activity">
    <reaction evidence="3">
        <text>K(+)(in) = K(+)(out)</text>
        <dbReference type="Rhea" id="RHEA:29463"/>
        <dbReference type="ChEBI" id="CHEBI:29103"/>
    </reaction>
</comment>
<comment type="activity regulation">
    <text evidence="2">Channel activity is strongly regulated by variations of cytosolic pH; channels are activated by alkaline and inhibited by acidic pH values. Activated by phosphatidylinositol 4,5 biphosphate (PtdIns(4,5)P2). Inhibited by Ba(2+) and Cs(+).</text>
</comment>
<comment type="subunit">
    <text evidence="2 3 8">Homotetramer (By similarity). In kidney cells, it forms heteromeric channels with Kir5.1/KCNJ16; this interaction is required for KCNJ16 localization to the basolateral membrane. Interacts with MAGI1, alone and possibly as a heteromer with KCNJ16; this interaction may facilitate KCNJ10/KCNJ16 potassium channel expression at the basolateral membrane in kidney cells (By similarity). Interacts with PATJ (PubMed:9647694).</text>
</comment>
<comment type="subcellular location">
    <subcellularLocation>
        <location evidence="3">Membrane</location>
        <topology evidence="3">Multi-pass membrane protein</topology>
    </subcellularLocation>
    <subcellularLocation>
        <location evidence="3">Basolateral cell membrane</location>
    </subcellularLocation>
    <text evidence="3 7">In kidney distal convoluted tubules, located in the basolateral membrane where it colocalizes with KCNJ16 (PubMed:33811157).</text>
</comment>
<comment type="tissue specificity">
    <text evidence="5 6 7">Widely expressed in adult brain, including in the neocortex, the stratum pyrimadale of the hippocampus and the piriform cortex. Expressed by cultured astrocytes and also by cocultured cortical neurons (at protein level). In the distal segment of the nephron, expressed in the distal convoluted tubule, the connecting tubule, and the early cortical collecting duct (PubMed:19420365, PubMed:33811157).</text>
</comment>
<comment type="disruption phenotype">
    <text evidence="6">In the neonatal period, knockout mice have a significantly lower urinary creatinine concentration than do normal mice, indicating polyuria. The urinary sodium concentration are significantly elevated, indicating renal salt loss, and calcium excretion is significantly reduced. Death occurs after postnatal day 8.</text>
</comment>
<comment type="similarity">
    <text evidence="9">Belongs to the inward rectifier-type potassium channel (TC 1.A.2.1) family. KCNJ10 subfamily.</text>
</comment>
<proteinExistence type="evidence at protein level"/>
<organism>
    <name type="scientific">Mus musculus</name>
    <name type="common">Mouse</name>
    <dbReference type="NCBI Taxonomy" id="10090"/>
    <lineage>
        <taxon>Eukaryota</taxon>
        <taxon>Metazoa</taxon>
        <taxon>Chordata</taxon>
        <taxon>Craniata</taxon>
        <taxon>Vertebrata</taxon>
        <taxon>Euteleostomi</taxon>
        <taxon>Mammalia</taxon>
        <taxon>Eutheria</taxon>
        <taxon>Euarchontoglires</taxon>
        <taxon>Glires</taxon>
        <taxon>Rodentia</taxon>
        <taxon>Myomorpha</taxon>
        <taxon>Muroidea</taxon>
        <taxon>Muridae</taxon>
        <taxon>Murinae</taxon>
        <taxon>Mus</taxon>
        <taxon>Mus</taxon>
    </lineage>
</organism>